<comment type="interaction">
    <interactant intactId="EBI-12810853">
        <id>Q8TAV5</id>
    </interactant>
    <interactant intactId="EBI-743105">
        <id>Q5JVL4</id>
        <label>EFHC1</label>
    </interactant>
    <organismsDiffer>false</organismsDiffer>
    <experiments>3</experiments>
</comment>
<comment type="interaction">
    <interactant intactId="EBI-12810853">
        <id>Q8TAV5</id>
    </interactant>
    <interactant intactId="EBI-12104696">
        <id>Q9H4M3-2</id>
        <label>FBXO44</label>
    </interactant>
    <organismsDiffer>false</organismsDiffer>
    <experiments>3</experiments>
</comment>
<comment type="interaction">
    <interactant intactId="EBI-12810853">
        <id>Q8TAV5</id>
    </interactant>
    <interactant intactId="EBI-725515">
        <id>O43559</id>
        <label>FRS3</label>
    </interactant>
    <organismsDiffer>false</organismsDiffer>
    <experiments>3</experiments>
</comment>
<comment type="interaction">
    <interactant intactId="EBI-12810853">
        <id>Q8TAV5</id>
    </interactant>
    <interactant intactId="EBI-347538">
        <id>Q9Y4H4</id>
        <label>GPSM3</label>
    </interactant>
    <organismsDiffer>false</organismsDiffer>
    <experiments>3</experiments>
</comment>
<comment type="interaction">
    <interactant intactId="EBI-12810853">
        <id>Q8TAV5</id>
    </interactant>
    <interactant intactId="EBI-742388">
        <id>Q9H8W4</id>
        <label>PLEKHF2</label>
    </interactant>
    <organismsDiffer>false</organismsDiffer>
    <experiments>3</experiments>
</comment>
<comment type="interaction">
    <interactant intactId="EBI-12810853">
        <id>Q8TAV5</id>
    </interactant>
    <interactant intactId="EBI-3939165">
        <id>O43711</id>
        <label>TLX3</label>
    </interactant>
    <organismsDiffer>false</organismsDiffer>
    <experiments>3</experiments>
</comment>
<comment type="subcellular location">
    <subcellularLocation>
        <location evidence="3">Secreted</location>
    </subcellularLocation>
</comment>
<proteinExistence type="evidence at protein level"/>
<feature type="signal peptide" evidence="1">
    <location>
        <begin position="1"/>
        <end position="22"/>
    </location>
</feature>
<feature type="chain" id="PRO_0000251890" description="Uncharacterized protein KCNJ5-AS1">
    <location>
        <begin position="23"/>
        <end position="145"/>
    </location>
</feature>
<feature type="region of interest" description="Disordered" evidence="2">
    <location>
        <begin position="103"/>
        <end position="145"/>
    </location>
</feature>
<feature type="glycosylation site" description="N-linked (GlcNAc...) asparagine" evidence="1">
    <location>
        <position position="98"/>
    </location>
</feature>
<gene>
    <name evidence="4" type="primary">KCNJ5-AS1</name>
    <name evidence="4" type="synonym">C11orf45</name>
</gene>
<name>KC5S1_HUMAN</name>
<organism>
    <name type="scientific">Homo sapiens</name>
    <name type="common">Human</name>
    <dbReference type="NCBI Taxonomy" id="9606"/>
    <lineage>
        <taxon>Eukaryota</taxon>
        <taxon>Metazoa</taxon>
        <taxon>Chordata</taxon>
        <taxon>Craniata</taxon>
        <taxon>Vertebrata</taxon>
        <taxon>Euteleostomi</taxon>
        <taxon>Mammalia</taxon>
        <taxon>Eutheria</taxon>
        <taxon>Euarchontoglires</taxon>
        <taxon>Primates</taxon>
        <taxon>Haplorrhini</taxon>
        <taxon>Catarrhini</taxon>
        <taxon>Hominidae</taxon>
        <taxon>Homo</taxon>
    </lineage>
</organism>
<protein>
    <recommendedName>
        <fullName evidence="3">Uncharacterized protein KCNJ5-AS1</fullName>
    </recommendedName>
    <alternativeName>
        <fullName evidence="4">KCNJ5 antisense RNA 1</fullName>
    </alternativeName>
</protein>
<sequence>MLTRLVLSAHLSSTTSPPWTHAAISWELDNVLMPSPRIWPQVTPTGRSASVRSEGNTSSLWNFSAGQDVHAIVTRTCESVLSSAVYTHGCGCVRSATNITCQSSGQQRQAARQEEENSICKAHDSREGRLGYPLSAHQPGSGGPN</sequence>
<dbReference type="EMBL" id="AK125634">
    <property type="protein sequence ID" value="BAG54227.1"/>
    <property type="molecule type" value="mRNA"/>
</dbReference>
<dbReference type="EMBL" id="AK314137">
    <property type="protein sequence ID" value="BAG36827.1"/>
    <property type="molecule type" value="mRNA"/>
</dbReference>
<dbReference type="EMBL" id="CH471065">
    <property type="protein sequence ID" value="EAW67728.1"/>
    <property type="molecule type" value="Genomic_DNA"/>
</dbReference>
<dbReference type="EMBL" id="CH471065">
    <property type="protein sequence ID" value="EAW67729.1"/>
    <property type="molecule type" value="Genomic_DNA"/>
</dbReference>
<dbReference type="EMBL" id="CH471065">
    <property type="protein sequence ID" value="EAW67730.1"/>
    <property type="molecule type" value="Genomic_DNA"/>
</dbReference>
<dbReference type="EMBL" id="BC025756">
    <property type="protein sequence ID" value="AAH25756.1"/>
    <property type="molecule type" value="mRNA"/>
</dbReference>
<dbReference type="RefSeq" id="NP_001243017.1">
    <property type="nucleotide sequence ID" value="NM_001256088.1"/>
</dbReference>
<dbReference type="RefSeq" id="NP_659450.1">
    <property type="nucleotide sequence ID" value="NM_145013.2"/>
</dbReference>
<dbReference type="RefSeq" id="XP_011540956.1">
    <property type="nucleotide sequence ID" value="XM_011542654.2"/>
</dbReference>
<dbReference type="RefSeq" id="XP_011540957.1">
    <property type="nucleotide sequence ID" value="XM_011542655.2"/>
</dbReference>
<dbReference type="BioGRID" id="128579">
    <property type="interactions" value="11"/>
</dbReference>
<dbReference type="IntAct" id="Q8TAV5">
    <property type="interactions" value="7"/>
</dbReference>
<dbReference type="STRING" id="9606.ENSP00000499245"/>
<dbReference type="GlyCosmos" id="Q8TAV5">
    <property type="glycosylation" value="1 site, No reported glycans"/>
</dbReference>
<dbReference type="GlyGen" id="Q8TAV5">
    <property type="glycosylation" value="1 site"/>
</dbReference>
<dbReference type="iPTMnet" id="Q8TAV5"/>
<dbReference type="PhosphoSitePlus" id="Q8TAV5"/>
<dbReference type="BioMuta" id="C11orf45"/>
<dbReference type="DMDM" id="74730393"/>
<dbReference type="jPOST" id="Q8TAV5"/>
<dbReference type="PaxDb" id="9606-ENSP00000307879"/>
<dbReference type="Antibodypedia" id="51323">
    <property type="antibodies" value="32 antibodies from 9 providers"/>
</dbReference>
<dbReference type="DNASU" id="219833"/>
<dbReference type="UCSC" id="uc001qeu.3">
    <property type="organism name" value="human"/>
</dbReference>
<dbReference type="AGR" id="HGNC:28584"/>
<dbReference type="DisGeNET" id="219833"/>
<dbReference type="GeneCards" id="KCNJ5-AS1"/>
<dbReference type="HGNC" id="HGNC:28584">
    <property type="gene designation" value="KCNJ5-AS1"/>
</dbReference>
<dbReference type="neXtProt" id="NX_Q8TAV5"/>
<dbReference type="VEuPathDB" id="HostDB:ENSG00000174370"/>
<dbReference type="eggNOG" id="ENOG502TG9K">
    <property type="taxonomic scope" value="Eukaryota"/>
</dbReference>
<dbReference type="HOGENOM" id="CLU_1795847_0_0_1"/>
<dbReference type="InParanoid" id="Q8TAV5"/>
<dbReference type="OMA" id="YTQGCGC"/>
<dbReference type="OrthoDB" id="9536672at2759"/>
<dbReference type="PAN-GO" id="Q8TAV5">
    <property type="GO annotations" value="0 GO annotations based on evolutionary models"/>
</dbReference>
<dbReference type="PhylomeDB" id="Q8TAV5"/>
<dbReference type="TreeFam" id="TF342259"/>
<dbReference type="PathwayCommons" id="Q8TAV5"/>
<dbReference type="SignaLink" id="Q8TAV5"/>
<dbReference type="BioGRID-ORCS" id="219833">
    <property type="hits" value="11 hits in 1132 CRISPR screens"/>
</dbReference>
<dbReference type="ChiTaRS" id="C11orf45">
    <property type="organism name" value="human"/>
</dbReference>
<dbReference type="GenomeRNAi" id="219833"/>
<dbReference type="Pharos" id="Q8TAV5">
    <property type="development level" value="Tdark"/>
</dbReference>
<dbReference type="PRO" id="PR:Q8TAV5"/>
<dbReference type="Proteomes" id="UP000005640">
    <property type="component" value="Chromosome 11"/>
</dbReference>
<dbReference type="RNAct" id="Q8TAV5">
    <property type="molecule type" value="protein"/>
</dbReference>
<dbReference type="Bgee" id="ENSG00000174370">
    <property type="expression patterns" value="Expressed in right adrenal gland cortex and 110 other cell types or tissues"/>
</dbReference>
<dbReference type="ExpressionAtlas" id="Q8TAV5">
    <property type="expression patterns" value="baseline and differential"/>
</dbReference>
<dbReference type="GO" id="GO:0005576">
    <property type="term" value="C:extracellular region"/>
    <property type="evidence" value="ECO:0007669"/>
    <property type="project" value="UniProtKB-SubCell"/>
</dbReference>
<dbReference type="InterPro" id="IPR041391">
    <property type="entry name" value="DUF5570"/>
</dbReference>
<dbReference type="Pfam" id="PF17731">
    <property type="entry name" value="DUF5570"/>
    <property type="match status" value="1"/>
</dbReference>
<evidence type="ECO:0000255" key="1"/>
<evidence type="ECO:0000256" key="2">
    <source>
        <dbReference type="SAM" id="MobiDB-lite"/>
    </source>
</evidence>
<evidence type="ECO:0000305" key="3"/>
<evidence type="ECO:0000312" key="4">
    <source>
        <dbReference type="HGNC" id="HGNC:28584"/>
    </source>
</evidence>
<keyword id="KW-0325">Glycoprotein</keyword>
<keyword id="KW-1185">Reference proteome</keyword>
<keyword id="KW-0964">Secreted</keyword>
<keyword id="KW-0732">Signal</keyword>
<reference key="1">
    <citation type="journal article" date="2004" name="Nat. Genet.">
        <title>Complete sequencing and characterization of 21,243 full-length human cDNAs.</title>
        <authorList>
            <person name="Ota T."/>
            <person name="Suzuki Y."/>
            <person name="Nishikawa T."/>
            <person name="Otsuki T."/>
            <person name="Sugiyama T."/>
            <person name="Irie R."/>
            <person name="Wakamatsu A."/>
            <person name="Hayashi K."/>
            <person name="Sato H."/>
            <person name="Nagai K."/>
            <person name="Kimura K."/>
            <person name="Makita H."/>
            <person name="Sekine M."/>
            <person name="Obayashi M."/>
            <person name="Nishi T."/>
            <person name="Shibahara T."/>
            <person name="Tanaka T."/>
            <person name="Ishii S."/>
            <person name="Yamamoto J."/>
            <person name="Saito K."/>
            <person name="Kawai Y."/>
            <person name="Isono Y."/>
            <person name="Nakamura Y."/>
            <person name="Nagahari K."/>
            <person name="Murakami K."/>
            <person name="Yasuda T."/>
            <person name="Iwayanagi T."/>
            <person name="Wagatsuma M."/>
            <person name="Shiratori A."/>
            <person name="Sudo H."/>
            <person name="Hosoiri T."/>
            <person name="Kaku Y."/>
            <person name="Kodaira H."/>
            <person name="Kondo H."/>
            <person name="Sugawara M."/>
            <person name="Takahashi M."/>
            <person name="Kanda K."/>
            <person name="Yokoi T."/>
            <person name="Furuya T."/>
            <person name="Kikkawa E."/>
            <person name="Omura Y."/>
            <person name="Abe K."/>
            <person name="Kamihara K."/>
            <person name="Katsuta N."/>
            <person name="Sato K."/>
            <person name="Tanikawa M."/>
            <person name="Yamazaki M."/>
            <person name="Ninomiya K."/>
            <person name="Ishibashi T."/>
            <person name="Yamashita H."/>
            <person name="Murakawa K."/>
            <person name="Fujimori K."/>
            <person name="Tanai H."/>
            <person name="Kimata M."/>
            <person name="Watanabe M."/>
            <person name="Hiraoka S."/>
            <person name="Chiba Y."/>
            <person name="Ishida S."/>
            <person name="Ono Y."/>
            <person name="Takiguchi S."/>
            <person name="Watanabe S."/>
            <person name="Yosida M."/>
            <person name="Hotuta T."/>
            <person name="Kusano J."/>
            <person name="Kanehori K."/>
            <person name="Takahashi-Fujii A."/>
            <person name="Hara H."/>
            <person name="Tanase T.-O."/>
            <person name="Nomura Y."/>
            <person name="Togiya S."/>
            <person name="Komai F."/>
            <person name="Hara R."/>
            <person name="Takeuchi K."/>
            <person name="Arita M."/>
            <person name="Imose N."/>
            <person name="Musashino K."/>
            <person name="Yuuki H."/>
            <person name="Oshima A."/>
            <person name="Sasaki N."/>
            <person name="Aotsuka S."/>
            <person name="Yoshikawa Y."/>
            <person name="Matsunawa H."/>
            <person name="Ichihara T."/>
            <person name="Shiohata N."/>
            <person name="Sano S."/>
            <person name="Moriya S."/>
            <person name="Momiyama H."/>
            <person name="Satoh N."/>
            <person name="Takami S."/>
            <person name="Terashima Y."/>
            <person name="Suzuki O."/>
            <person name="Nakagawa S."/>
            <person name="Senoh A."/>
            <person name="Mizoguchi H."/>
            <person name="Goto Y."/>
            <person name="Shimizu F."/>
            <person name="Wakebe H."/>
            <person name="Hishigaki H."/>
            <person name="Watanabe T."/>
            <person name="Sugiyama A."/>
            <person name="Takemoto M."/>
            <person name="Kawakami B."/>
            <person name="Yamazaki M."/>
            <person name="Watanabe K."/>
            <person name="Kumagai A."/>
            <person name="Itakura S."/>
            <person name="Fukuzumi Y."/>
            <person name="Fujimori Y."/>
            <person name="Komiyama M."/>
            <person name="Tashiro H."/>
            <person name="Tanigami A."/>
            <person name="Fujiwara T."/>
            <person name="Ono T."/>
            <person name="Yamada K."/>
            <person name="Fujii Y."/>
            <person name="Ozaki K."/>
            <person name="Hirao M."/>
            <person name="Ohmori Y."/>
            <person name="Kawabata A."/>
            <person name="Hikiji T."/>
            <person name="Kobatake N."/>
            <person name="Inagaki H."/>
            <person name="Ikema Y."/>
            <person name="Okamoto S."/>
            <person name="Okitani R."/>
            <person name="Kawakami T."/>
            <person name="Noguchi S."/>
            <person name="Itoh T."/>
            <person name="Shigeta K."/>
            <person name="Senba T."/>
            <person name="Matsumura K."/>
            <person name="Nakajima Y."/>
            <person name="Mizuno T."/>
            <person name="Morinaga M."/>
            <person name="Sasaki M."/>
            <person name="Togashi T."/>
            <person name="Oyama M."/>
            <person name="Hata H."/>
            <person name="Watanabe M."/>
            <person name="Komatsu T."/>
            <person name="Mizushima-Sugano J."/>
            <person name="Satoh T."/>
            <person name="Shirai Y."/>
            <person name="Takahashi Y."/>
            <person name="Nakagawa K."/>
            <person name="Okumura K."/>
            <person name="Nagase T."/>
            <person name="Nomura N."/>
            <person name="Kikuchi H."/>
            <person name="Masuho Y."/>
            <person name="Yamashita R."/>
            <person name="Nakai K."/>
            <person name="Yada T."/>
            <person name="Nakamura Y."/>
            <person name="Ohara O."/>
            <person name="Isogai T."/>
            <person name="Sugano S."/>
        </authorList>
    </citation>
    <scope>NUCLEOTIDE SEQUENCE [LARGE SCALE MRNA]</scope>
    <source>
        <tissue>Tongue</tissue>
    </source>
</reference>
<reference key="2">
    <citation type="submission" date="2005-07" db="EMBL/GenBank/DDBJ databases">
        <authorList>
            <person name="Mural R.J."/>
            <person name="Istrail S."/>
            <person name="Sutton G.G."/>
            <person name="Florea L."/>
            <person name="Halpern A.L."/>
            <person name="Mobarry C.M."/>
            <person name="Lippert R."/>
            <person name="Walenz B."/>
            <person name="Shatkay H."/>
            <person name="Dew I."/>
            <person name="Miller J.R."/>
            <person name="Flanigan M.J."/>
            <person name="Edwards N.J."/>
            <person name="Bolanos R."/>
            <person name="Fasulo D."/>
            <person name="Halldorsson B.V."/>
            <person name="Hannenhalli S."/>
            <person name="Turner R."/>
            <person name="Yooseph S."/>
            <person name="Lu F."/>
            <person name="Nusskern D.R."/>
            <person name="Shue B.C."/>
            <person name="Zheng X.H."/>
            <person name="Zhong F."/>
            <person name="Delcher A.L."/>
            <person name="Huson D.H."/>
            <person name="Kravitz S.A."/>
            <person name="Mouchard L."/>
            <person name="Reinert K."/>
            <person name="Remington K.A."/>
            <person name="Clark A.G."/>
            <person name="Waterman M.S."/>
            <person name="Eichler E.E."/>
            <person name="Adams M.D."/>
            <person name="Hunkapiller M.W."/>
            <person name="Myers E.W."/>
            <person name="Venter J.C."/>
        </authorList>
    </citation>
    <scope>NUCLEOTIDE SEQUENCE [LARGE SCALE GENOMIC DNA]</scope>
</reference>
<reference key="3">
    <citation type="journal article" date="2004" name="Genome Res.">
        <title>The status, quality, and expansion of the NIH full-length cDNA project: the Mammalian Gene Collection (MGC).</title>
        <authorList>
            <consortium name="The MGC Project Team"/>
        </authorList>
    </citation>
    <scope>NUCLEOTIDE SEQUENCE [LARGE SCALE MRNA]</scope>
    <source>
        <tissue>Lung</tissue>
    </source>
</reference>
<accession>Q8TAV5</accession>
<accession>A0A024R3N7</accession>
<accession>B2RAD0</accession>